<comment type="function">
    <text evidence="5 6">Component of the NF-E2 complex essential for regulating erythroid and megakaryocytic maturation and differentiation. Binds to the hypersensitive site 2 (HS2) of the beta-globin control region (LCR). This subunit (NFE2) recognizes the TCAT/C sequence of the AP-1-like core palindrome present in a number of erythroid and megakaryocytic gene promoters. Requires MAFK or other small MAF proteins for binding to the NF-E2 motif. May play a role in all aspects of hemoglobin production from globin and heme synthesis to procurement of iron.</text>
</comment>
<comment type="subunit">
    <text evidence="1">Homodimer; can bind DNA as a homodimer. Erythroid transcription activator nuclear factor erythroid-derived 2 (NF-E2), composed of a heterodimer of NFE2 and MAFK, possesses transactivation activity on beta-globin. Also forms high affinity heterodimer with MAFG; the interaction promotes erythropoiesis. Interacts (via the PXY motif 1) with ITCH (via the WW 1 domain); the interaction promotes 'Lys63'-linked ubiquitination of NFE2, translocates it to the cytoplasm and inhibits its transactivation activity. Interacts with KMT2D/MLL2; the interaction promotes transactivation of the beta-globin locus (By similarity). Interacts with MAPK8 (phosphorylated form); the interaction leads to phosphorylation of NFE2 in undifferentiated cells (By similarity).</text>
</comment>
<comment type="interaction">
    <interactant intactId="EBI-726369">
        <id>Q16621</id>
    </interactant>
    <interactant intactId="EBI-307461">
        <id>Q9Y297</id>
        <label>BTRC</label>
    </interactant>
    <organismsDiffer>false</organismsDiffer>
    <experiments>3</experiments>
</comment>
<comment type="interaction">
    <interactant intactId="EBI-726369">
        <id>Q16621</id>
    </interactant>
    <interactant intactId="EBI-348399">
        <id>P22607</id>
        <label>FGFR3</label>
    </interactant>
    <organismsDiffer>false</organismsDiffer>
    <experiments>3</experiments>
</comment>
<comment type="interaction">
    <interactant intactId="EBI-726369">
        <id>Q16621</id>
    </interactant>
    <interactant intactId="EBI-1955541">
        <id>Q53GS7</id>
        <label>GLE1</label>
    </interactant>
    <organismsDiffer>false</organismsDiffer>
    <experiments>3</experiments>
</comment>
<comment type="interaction">
    <interactant intactId="EBI-726369">
        <id>Q16621</id>
    </interactant>
    <interactant intactId="EBI-351506">
        <id>P06396</id>
        <label>GSN</label>
    </interactant>
    <organismsDiffer>false</organismsDiffer>
    <experiments>3</experiments>
</comment>
<comment type="interaction">
    <interactant intactId="EBI-726369">
        <id>Q16621</id>
    </interactant>
    <interactant intactId="EBI-726369">
        <id>Q16621</id>
        <label>NFE2</label>
    </interactant>
    <organismsDiffer>false</organismsDiffer>
    <experiments>2</experiments>
</comment>
<comment type="interaction">
    <interactant intactId="EBI-726369">
        <id>Q16621</id>
    </interactant>
    <interactant intactId="EBI-10890629">
        <id>Q9Y4A8</id>
        <label>NFE2L3</label>
    </interactant>
    <organismsDiffer>false</organismsDiffer>
    <experiments>4</experiments>
</comment>
<comment type="interaction">
    <interactant intactId="EBI-726369">
        <id>Q16621</id>
    </interactant>
    <interactant intactId="EBI-5235340">
        <id>Q7Z699</id>
        <label>SPRED1</label>
    </interactant>
    <organismsDiffer>false</organismsDiffer>
    <experiments>3</experiments>
</comment>
<comment type="interaction">
    <interactant intactId="EBI-726369">
        <id>Q16621</id>
    </interactant>
    <interactant intactId="EBI-25900580">
        <id>Q9Y649</id>
    </interactant>
    <organismsDiffer>false</organismsDiffer>
    <experiments>3</experiments>
</comment>
<comment type="interaction">
    <interactant intactId="EBI-726369">
        <id>Q16621</id>
    </interactant>
    <interactant intactId="EBI-10889526">
        <id>Q9DGW5</id>
        <label>MDV005</label>
    </interactant>
    <organismsDiffer>true</organismsDiffer>
    <experiments>2</experiments>
</comment>
<comment type="subcellular location">
    <subcellularLocation>
        <location>Nucleus</location>
        <location>PML body</location>
    </subcellularLocation>
    <subcellularLocation>
        <location>Cytoplasm</location>
    </subcellularLocation>
    <text>The sumoylated form locates to the nuclear bodies PML oncogenic domains (PODs). Translocated to the cytoplasm through interaction with ITCH.</text>
</comment>
<comment type="tissue specificity">
    <text>Expressed in hematopoietic cells and also in colon and testis.</text>
</comment>
<comment type="domain">
    <text evidence="1">The PXY motifs are required for binding WW domains. PXY1 is required to promote transactivation of beta-globin and for hyperacetylation of histone H3, but not for binding to the HS2 promoter site (By similarity).</text>
</comment>
<comment type="PTM">
    <text evidence="1">Phosphorylated on serine residues. In undifferentiated erythrocytes, phosphorylated by MAPK8 which then leads to ubiquitination and protein degradation.</text>
</comment>
<comment type="PTM">
    <text evidence="6">Sumoylated. Sumoylation is required for translocation to nuclear bodies PODs, anchoring to the gene loci, and transactivation of the beta-globin gene.</text>
</comment>
<comment type="PTM">
    <text evidence="1">Ubiquitinated mainly by 'Lys63'-linked ubiquitin. Polyubiquitination with 'Lys63'-linked ubiquitin by ITCH retains NFE2 in the cytoplasm preventing its transactivation activity. In undifferentiated erythrocyte, ubiquitinated after MAPK8-mediatd phosphorylation leading to protein degradation (By similarity).</text>
</comment>
<comment type="similarity">
    <text evidence="7">Belongs to the bZIP family. CNC subfamily.</text>
</comment>
<protein>
    <recommendedName>
        <fullName>Transcription factor NF-E2 45 kDa subunit</fullName>
    </recommendedName>
    <alternativeName>
        <fullName>Leucine zipper protein NF-E2</fullName>
    </alternativeName>
    <alternativeName>
        <fullName>Nuclear factor, erythroid-derived 2 45 kDa subunit</fullName>
    </alternativeName>
    <alternativeName>
        <fullName>p45 NF-E2</fullName>
    </alternativeName>
</protein>
<proteinExistence type="evidence at protein level"/>
<dbReference type="EMBL" id="L24122">
    <property type="protein sequence ID" value="AAA16118.1"/>
    <property type="molecule type" value="mRNA"/>
</dbReference>
<dbReference type="EMBL" id="L13974">
    <property type="protein sequence ID" value="AAA35612.1"/>
    <property type="molecule type" value="mRNA"/>
</dbReference>
<dbReference type="EMBL" id="S77763">
    <property type="protein sequence ID" value="AAB34115.1"/>
    <property type="molecule type" value="mRNA"/>
</dbReference>
<dbReference type="EMBL" id="CR450284">
    <property type="protein sequence ID" value="CAG29280.1"/>
    <property type="molecule type" value="mRNA"/>
</dbReference>
<dbReference type="EMBL" id="BT007288">
    <property type="protein sequence ID" value="AAP35952.1"/>
    <property type="molecule type" value="mRNA"/>
</dbReference>
<dbReference type="EMBL" id="DQ367844">
    <property type="protein sequence ID" value="ABC79302.1"/>
    <property type="molecule type" value="Genomic_DNA"/>
</dbReference>
<dbReference type="EMBL" id="BC005044">
    <property type="protein sequence ID" value="AAH05044.1"/>
    <property type="molecule type" value="mRNA"/>
</dbReference>
<dbReference type="CCDS" id="CCDS8876.1"/>
<dbReference type="PIR" id="A49671">
    <property type="entry name" value="A49671"/>
</dbReference>
<dbReference type="PIR" id="A54692">
    <property type="entry name" value="A54692"/>
</dbReference>
<dbReference type="RefSeq" id="NP_001129495.1">
    <property type="nucleotide sequence ID" value="NM_001136023.3"/>
</dbReference>
<dbReference type="RefSeq" id="NP_001248390.1">
    <property type="nucleotide sequence ID" value="NM_001261461.2"/>
</dbReference>
<dbReference type="RefSeq" id="NP_001387294.1">
    <property type="nucleotide sequence ID" value="NM_001400365.1"/>
</dbReference>
<dbReference type="RefSeq" id="NP_006154.1">
    <property type="nucleotide sequence ID" value="NM_006163.3"/>
</dbReference>
<dbReference type="RefSeq" id="XP_005268963.1">
    <property type="nucleotide sequence ID" value="XM_005268906.4"/>
</dbReference>
<dbReference type="PDB" id="2KZ5">
    <property type="method" value="NMR"/>
    <property type="chains" value="A=214-293"/>
</dbReference>
<dbReference type="PDBsum" id="2KZ5"/>
<dbReference type="BMRB" id="Q16621"/>
<dbReference type="SMR" id="Q16621"/>
<dbReference type="BioGRID" id="110850">
    <property type="interactions" value="22"/>
</dbReference>
<dbReference type="ComplexPortal" id="CPX-6568">
    <property type="entry name" value="bZIP transcription factor complex, ATF4-NFE2"/>
</dbReference>
<dbReference type="ComplexPortal" id="CPX-6789">
    <property type="entry name" value="bZIP transcription factor complex, ATF7-NFE2"/>
</dbReference>
<dbReference type="DIP" id="DIP-57844N"/>
<dbReference type="FunCoup" id="Q16621">
    <property type="interactions" value="1234"/>
</dbReference>
<dbReference type="IntAct" id="Q16621">
    <property type="interactions" value="24"/>
</dbReference>
<dbReference type="MINT" id="Q16621"/>
<dbReference type="STRING" id="9606.ENSP00000439120"/>
<dbReference type="BindingDB" id="Q16621"/>
<dbReference type="ChEMBL" id="CHEMBL4523303"/>
<dbReference type="GlyGen" id="Q16621">
    <property type="glycosylation" value="2 sites, 1 O-linked glycan (2 sites)"/>
</dbReference>
<dbReference type="iPTMnet" id="Q16621"/>
<dbReference type="PhosphoSitePlus" id="Q16621"/>
<dbReference type="BioMuta" id="NFE2"/>
<dbReference type="DMDM" id="6831585"/>
<dbReference type="jPOST" id="Q16621"/>
<dbReference type="MassIVE" id="Q16621"/>
<dbReference type="PaxDb" id="9606-ENSP00000439120"/>
<dbReference type="PeptideAtlas" id="Q16621"/>
<dbReference type="ProteomicsDB" id="60962"/>
<dbReference type="Pumba" id="Q16621"/>
<dbReference type="Antibodypedia" id="907">
    <property type="antibodies" value="151 antibodies from 27 providers"/>
</dbReference>
<dbReference type="DNASU" id="4778"/>
<dbReference type="Ensembl" id="ENST00000312156.8">
    <property type="protein sequence ID" value="ENSP00000312436.4"/>
    <property type="gene ID" value="ENSG00000123405.14"/>
</dbReference>
<dbReference type="Ensembl" id="ENST00000435572.7">
    <property type="protein sequence ID" value="ENSP00000397185.2"/>
    <property type="gene ID" value="ENSG00000123405.14"/>
</dbReference>
<dbReference type="Ensembl" id="ENST00000540264.2">
    <property type="protein sequence ID" value="ENSP00000439120.2"/>
    <property type="gene ID" value="ENSG00000123405.14"/>
</dbReference>
<dbReference type="Ensembl" id="ENST00000553070.5">
    <property type="protein sequence ID" value="ENSP00000447558.1"/>
    <property type="gene ID" value="ENSG00000123405.14"/>
</dbReference>
<dbReference type="GeneID" id="4778"/>
<dbReference type="KEGG" id="hsa:4778"/>
<dbReference type="MANE-Select" id="ENST00000435572.7">
    <property type="protein sequence ID" value="ENSP00000397185.2"/>
    <property type="RefSeq nucleotide sequence ID" value="NM_001136023.3"/>
    <property type="RefSeq protein sequence ID" value="NP_001129495.1"/>
</dbReference>
<dbReference type="UCSC" id="uc001sfq.5">
    <property type="organism name" value="human"/>
</dbReference>
<dbReference type="AGR" id="HGNC:7780"/>
<dbReference type="CTD" id="4778"/>
<dbReference type="DisGeNET" id="4778"/>
<dbReference type="GeneCards" id="NFE2"/>
<dbReference type="HGNC" id="HGNC:7780">
    <property type="gene designation" value="NFE2"/>
</dbReference>
<dbReference type="HPA" id="ENSG00000123405">
    <property type="expression patterns" value="Group enriched (bone marrow, lymphoid tissue)"/>
</dbReference>
<dbReference type="MalaCards" id="NFE2"/>
<dbReference type="MIM" id="601490">
    <property type="type" value="gene"/>
</dbReference>
<dbReference type="neXtProt" id="NX_Q16621"/>
<dbReference type="OpenTargets" id="ENSG00000123405"/>
<dbReference type="PharmGKB" id="PA31586"/>
<dbReference type="VEuPathDB" id="HostDB:ENSG00000123405"/>
<dbReference type="eggNOG" id="KOG3863">
    <property type="taxonomic scope" value="Eukaryota"/>
</dbReference>
<dbReference type="GeneTree" id="ENSGT00950000182892"/>
<dbReference type="HOGENOM" id="CLU_058451_0_0_1"/>
<dbReference type="InParanoid" id="Q16621"/>
<dbReference type="OMA" id="YCDIFQH"/>
<dbReference type="OrthoDB" id="7458135at2759"/>
<dbReference type="PAN-GO" id="Q16621">
    <property type="GO annotations" value="4 GO annotations based on evolutionary models"/>
</dbReference>
<dbReference type="PhylomeDB" id="Q16621"/>
<dbReference type="TreeFam" id="TF326681"/>
<dbReference type="PathwayCommons" id="Q16621"/>
<dbReference type="Reactome" id="R-HSA-8936459">
    <property type="pathway name" value="RUNX1 regulates genes involved in megakaryocyte differentiation and platelet function"/>
</dbReference>
<dbReference type="Reactome" id="R-HSA-983231">
    <property type="pathway name" value="Factors involved in megakaryocyte development and platelet production"/>
</dbReference>
<dbReference type="SignaLink" id="Q16621"/>
<dbReference type="SIGNOR" id="Q16621"/>
<dbReference type="BioGRID-ORCS" id="4778">
    <property type="hits" value="44 hits in 1185 CRISPR screens"/>
</dbReference>
<dbReference type="ChiTaRS" id="NFE2">
    <property type="organism name" value="human"/>
</dbReference>
<dbReference type="EvolutionaryTrace" id="Q16621"/>
<dbReference type="GeneWiki" id="NFE2"/>
<dbReference type="GenomeRNAi" id="4778"/>
<dbReference type="Pharos" id="Q16621">
    <property type="development level" value="Tchem"/>
</dbReference>
<dbReference type="PRO" id="PR:Q16621"/>
<dbReference type="Proteomes" id="UP000005640">
    <property type="component" value="Chromosome 12"/>
</dbReference>
<dbReference type="RNAct" id="Q16621">
    <property type="molecule type" value="protein"/>
</dbReference>
<dbReference type="Bgee" id="ENSG00000123405">
    <property type="expression patterns" value="Expressed in blood and 99 other cell types or tissues"/>
</dbReference>
<dbReference type="ExpressionAtlas" id="Q16621">
    <property type="expression patterns" value="baseline and differential"/>
</dbReference>
<dbReference type="GO" id="GO:0000785">
    <property type="term" value="C:chromatin"/>
    <property type="evidence" value="ECO:0000247"/>
    <property type="project" value="NTNU_SB"/>
</dbReference>
<dbReference type="GO" id="GO:0005737">
    <property type="term" value="C:cytoplasm"/>
    <property type="evidence" value="ECO:0007669"/>
    <property type="project" value="UniProtKB-SubCell"/>
</dbReference>
<dbReference type="GO" id="GO:0005654">
    <property type="term" value="C:nucleoplasm"/>
    <property type="evidence" value="ECO:0000304"/>
    <property type="project" value="Reactome"/>
</dbReference>
<dbReference type="GO" id="GO:0005634">
    <property type="term" value="C:nucleus"/>
    <property type="evidence" value="ECO:0000318"/>
    <property type="project" value="GO_Central"/>
</dbReference>
<dbReference type="GO" id="GO:0016605">
    <property type="term" value="C:PML body"/>
    <property type="evidence" value="ECO:0007669"/>
    <property type="project" value="UniProtKB-SubCell"/>
</dbReference>
<dbReference type="GO" id="GO:0032993">
    <property type="term" value="C:protein-DNA complex"/>
    <property type="evidence" value="ECO:0000314"/>
    <property type="project" value="UniProtKB"/>
</dbReference>
<dbReference type="GO" id="GO:0090575">
    <property type="term" value="C:RNA polymerase II transcription regulator complex"/>
    <property type="evidence" value="ECO:0000353"/>
    <property type="project" value="ComplexPortal"/>
</dbReference>
<dbReference type="GO" id="GO:0003677">
    <property type="term" value="F:DNA binding"/>
    <property type="evidence" value="ECO:0000314"/>
    <property type="project" value="UniProtKB"/>
</dbReference>
<dbReference type="GO" id="GO:0003700">
    <property type="term" value="F:DNA-binding transcription factor activity"/>
    <property type="evidence" value="ECO:0000304"/>
    <property type="project" value="ProtInc"/>
</dbReference>
<dbReference type="GO" id="GO:0000981">
    <property type="term" value="F:DNA-binding transcription factor activity, RNA polymerase II-specific"/>
    <property type="evidence" value="ECO:0000247"/>
    <property type="project" value="NTNU_SB"/>
</dbReference>
<dbReference type="GO" id="GO:0042802">
    <property type="term" value="F:identical protein binding"/>
    <property type="evidence" value="ECO:0000353"/>
    <property type="project" value="IntAct"/>
</dbReference>
<dbReference type="GO" id="GO:0000978">
    <property type="term" value="F:RNA polymerase II cis-regulatory region sequence-specific DNA binding"/>
    <property type="evidence" value="ECO:0000318"/>
    <property type="project" value="GO_Central"/>
</dbReference>
<dbReference type="GO" id="GO:0043565">
    <property type="term" value="F:sequence-specific DNA binding"/>
    <property type="evidence" value="ECO:0000304"/>
    <property type="project" value="BHF-UCL"/>
</dbReference>
<dbReference type="GO" id="GO:1990837">
    <property type="term" value="F:sequence-specific double-stranded DNA binding"/>
    <property type="evidence" value="ECO:0000314"/>
    <property type="project" value="ARUK-UCL"/>
</dbReference>
<dbReference type="GO" id="GO:0050699">
    <property type="term" value="F:WW domain binding"/>
    <property type="evidence" value="ECO:0000314"/>
    <property type="project" value="MGI"/>
</dbReference>
<dbReference type="GO" id="GO:0007599">
    <property type="term" value="P:hemostasis"/>
    <property type="evidence" value="ECO:0000304"/>
    <property type="project" value="UniProtKB"/>
</dbReference>
<dbReference type="GO" id="GO:0140467">
    <property type="term" value="P:integrated stress response signaling"/>
    <property type="evidence" value="ECO:0000303"/>
    <property type="project" value="ComplexPortal"/>
</dbReference>
<dbReference type="GO" id="GO:0006337">
    <property type="term" value="P:nucleosome disassembly"/>
    <property type="evidence" value="ECO:0000304"/>
    <property type="project" value="BHF-UCL"/>
</dbReference>
<dbReference type="GO" id="GO:0045893">
    <property type="term" value="P:positive regulation of DNA-templated transcription"/>
    <property type="evidence" value="ECO:0000304"/>
    <property type="project" value="BHF-UCL"/>
</dbReference>
<dbReference type="GO" id="GO:0006357">
    <property type="term" value="P:regulation of transcription by RNA polymerase II"/>
    <property type="evidence" value="ECO:0000318"/>
    <property type="project" value="GO_Central"/>
</dbReference>
<dbReference type="CDD" id="cd14720">
    <property type="entry name" value="bZIP_NFE2-like"/>
    <property type="match status" value="1"/>
</dbReference>
<dbReference type="FunFam" id="1.10.880.10:FF:000001">
    <property type="entry name" value="Nuclear factor erythroid 2-related factor 2"/>
    <property type="match status" value="1"/>
</dbReference>
<dbReference type="Gene3D" id="1.10.880.10">
    <property type="entry name" value="Transcription factor, Skn-1-like, DNA-binding domain"/>
    <property type="match status" value="1"/>
</dbReference>
<dbReference type="IDEAL" id="IID00477"/>
<dbReference type="InterPro" id="IPR004827">
    <property type="entry name" value="bZIP"/>
</dbReference>
<dbReference type="InterPro" id="IPR004826">
    <property type="entry name" value="bZIP_Maf"/>
</dbReference>
<dbReference type="InterPro" id="IPR046347">
    <property type="entry name" value="bZIP_sf"/>
</dbReference>
<dbReference type="InterPro" id="IPR047167">
    <property type="entry name" value="NFE2-like"/>
</dbReference>
<dbReference type="InterPro" id="IPR008917">
    <property type="entry name" value="TF_DNA-bd_sf"/>
</dbReference>
<dbReference type="PANTHER" id="PTHR24411">
    <property type="entry name" value="NUCLEAR FACTOR ERYTHROID 2-RELATED FACTOR"/>
    <property type="match status" value="1"/>
</dbReference>
<dbReference type="PANTHER" id="PTHR24411:SF26">
    <property type="entry name" value="TRANSCRIPTION FACTOR NF-E2 45 KDA SUBUNIT"/>
    <property type="match status" value="1"/>
</dbReference>
<dbReference type="Pfam" id="PF03131">
    <property type="entry name" value="bZIP_Maf"/>
    <property type="match status" value="1"/>
</dbReference>
<dbReference type="SMART" id="SM00338">
    <property type="entry name" value="BRLZ"/>
    <property type="match status" value="1"/>
</dbReference>
<dbReference type="SUPFAM" id="SSF47454">
    <property type="entry name" value="A DNA-binding domain in eukaryotic transcription factors"/>
    <property type="match status" value="1"/>
</dbReference>
<dbReference type="SUPFAM" id="SSF57959">
    <property type="entry name" value="Leucine zipper domain"/>
    <property type="match status" value="1"/>
</dbReference>
<dbReference type="PROSITE" id="PS50217">
    <property type="entry name" value="BZIP"/>
    <property type="match status" value="1"/>
</dbReference>
<dbReference type="PROSITE" id="PS00036">
    <property type="entry name" value="BZIP_BASIC"/>
    <property type="match status" value="1"/>
</dbReference>
<gene>
    <name type="primary">NFE2</name>
</gene>
<sequence length="373" mass="41473">MSPCPPQQSRNRVIQLSTSELGEMELTWQEIMSITELQGLNAPSEPSFEPQAPAPYLGPPPPTTYCPCSIHPDSGFPLPPPPYELPASTSHVPDPPYSYGNMAIPVSKPLSLSGLLSEPLQDPLALLDIGLPAGPPKPQEDPESDSGLSLNYSDAESLELEGTEAGRRRSEYVEMYPVEYPYSLMPNSLAHSNYTLPAAETPLALEPSSGPVRAKPTARGEAGSRDERRALAMKIPFPTDKIVNLPVDDFNELLARYPLTESQLALVRDIRRRGKNKVAAQNCRKRKLETIVQLERELERLTNERERLLRARGEADRTLEVMRQQLTELYRDIFQHLRDESGNSYSPEEYALQQAADGTIFLVPRGTKMEATD</sequence>
<reference key="1">
    <citation type="journal article" date="1993" name="Proc. Natl. Acad. Sci. U.S.A.">
        <title>Isolation of cDNA encoding the human NF-E2 protein.</title>
        <authorList>
            <person name="Chan J.Y."/>
            <person name="Han X.L."/>
            <person name="Kan Y.W."/>
        </authorList>
    </citation>
    <scope>NUCLEOTIDE SEQUENCE [MRNA]</scope>
</reference>
<reference key="2">
    <citation type="journal article" date="1993" name="Mol. Cell. Biol.">
        <title>Purification of the human NF-E2 complex: cDNA cloning of the hematopoietic cell-specific subunit and evidence for an associated partner.</title>
        <authorList>
            <person name="Ney P.A."/>
            <person name="Andrews N.C."/>
            <person name="Jane S.M."/>
            <person name="Safer B."/>
            <person name="Purucker M.E."/>
            <person name="Weremowicz S."/>
            <person name="Goff S.C."/>
            <person name="Orkin S.H."/>
            <person name="Neinhuis A.W."/>
        </authorList>
    </citation>
    <scope>NUCLEOTIDE SEQUENCE [MRNA]</scope>
</reference>
<reference key="3">
    <citation type="journal article" date="1995" name="Proc. Natl. Acad. Sci. U.S.A.">
        <title>Isolation of a differentially regulated splicing isoform of human NF-E2.</title>
        <authorList>
            <person name="Pischedda C."/>
            <person name="Cocco S."/>
            <person name="Melis A."/>
            <person name="Marini M.G."/>
            <person name="Kan Y.W."/>
            <person name="Cao A."/>
            <person name="Moi P."/>
        </authorList>
    </citation>
    <scope>NUCLEOTIDE SEQUENCE [MRNA]</scope>
    <source>
        <tissue>Fetal liver</tissue>
    </source>
</reference>
<reference key="4">
    <citation type="submission" date="2004-05" db="EMBL/GenBank/DDBJ databases">
        <title>Cloning of human full open reading frames in Gateway(TM) system entry vector (pDONR201).</title>
        <authorList>
            <person name="Ebert L."/>
            <person name="Schick M."/>
            <person name="Neubert P."/>
            <person name="Schatten R."/>
            <person name="Henze S."/>
            <person name="Korn B."/>
        </authorList>
    </citation>
    <scope>NUCLEOTIDE SEQUENCE [LARGE SCALE MRNA]</scope>
</reference>
<reference key="5">
    <citation type="submission" date="2004-10" db="EMBL/GenBank/DDBJ databases">
        <title>Cloning of human full-length CDSs in BD Creator(TM) system donor vector.</title>
        <authorList>
            <person name="Kalnine N."/>
            <person name="Chen X."/>
            <person name="Rolfs A."/>
            <person name="Halleck A."/>
            <person name="Hines L."/>
            <person name="Eisenstein S."/>
            <person name="Koundinya M."/>
            <person name="Raphael J."/>
            <person name="Moreira D."/>
            <person name="Kelley T."/>
            <person name="LaBaer J."/>
            <person name="Lin Y."/>
            <person name="Phelan M."/>
            <person name="Farmer A."/>
        </authorList>
    </citation>
    <scope>NUCLEOTIDE SEQUENCE [LARGE SCALE MRNA]</scope>
</reference>
<reference key="6">
    <citation type="submission" date="2006-01" db="EMBL/GenBank/DDBJ databases">
        <authorList>
            <consortium name="SeattleSNPs variation discovery resource"/>
        </authorList>
    </citation>
    <scope>NUCLEOTIDE SEQUENCE [GENOMIC DNA]</scope>
</reference>
<reference key="7">
    <citation type="journal article" date="2004" name="Genome Res.">
        <title>The status, quality, and expansion of the NIH full-length cDNA project: the Mammalian Gene Collection (MGC).</title>
        <authorList>
            <consortium name="The MGC Project Team"/>
        </authorList>
    </citation>
    <scope>NUCLEOTIDE SEQUENCE [LARGE SCALE MRNA]</scope>
    <source>
        <tissue>Lung</tissue>
    </source>
</reference>
<reference key="8">
    <citation type="journal article" date="2001" name="J. Biol. Chem.">
        <title>Stimulation of NF-E2 DNA binding by CREB-binding protein (CBP)-mediated acetylation.</title>
        <authorList>
            <person name="Hung H.-L."/>
            <person name="Kim A.Y."/>
            <person name="Hong W."/>
            <person name="Rakowski C."/>
            <person name="Blobel G.A."/>
        </authorList>
    </citation>
    <scope>INTERACTION WITH MAFG</scope>
    <scope>FUNCTION</scope>
</reference>
<reference key="9">
    <citation type="journal article" date="2005" name="Mol. Cell. Biol.">
        <title>Sumoylation of p45/NF-E2: nuclear positioning and transcriptional activation of the mammalian beta-like globin gene locus.</title>
        <authorList>
            <person name="Shyu Y.-C."/>
            <person name="Lee T.-L."/>
            <person name="Ting C.-Y."/>
            <person name="Wen S.-C."/>
            <person name="Hsieh L.-J."/>
            <person name="Li Y.-C."/>
            <person name="Hwang J.-L."/>
            <person name="Lin C.-C."/>
            <person name="Shen C.-K.J."/>
        </authorList>
    </citation>
    <scope>SUMOYLATION AT LYS-368</scope>
    <scope>SUBCELLULAR LOCATION</scope>
    <scope>FUNCTION</scope>
    <scope>MUTAGENESIS OF LYS-368</scope>
    <scope>IDENTIFICATION BY MASS SPECTROMETRY</scope>
</reference>
<reference key="10">
    <citation type="journal article" date="2008" name="Biochem. Biophys. Res. Commun.">
        <title>Itch regulates p45/NF-E2 in vivo by Lys63-linked ubiquitination.</title>
        <authorList>
            <person name="Lee T.-L."/>
            <person name="Shyu Y.-C."/>
            <person name="Hsu T.-Y."/>
            <person name="Shen C.-K.J."/>
        </authorList>
    </citation>
    <scope>INTERACTION WITH ITCH</scope>
    <scope>SUBCELLULAR LOCATION</scope>
    <scope>UBIQUITINATION</scope>
</reference>
<reference key="11">
    <citation type="submission" date="2010-11" db="PDB data bank">
        <title>Northeast structural genomics consortium target HR4653B.</title>
        <authorList>
            <consortium name="Northeast structural genomics consortium (NESG)"/>
        </authorList>
    </citation>
    <scope>STRUCTURE BY NMR OF 214-293</scope>
</reference>
<accession>Q16621</accession>
<accession>Q07720</accession>
<accession>Q6ICV9</accession>
<feature type="chain" id="PRO_0000076446" description="Transcription factor NF-E2 45 kDa subunit">
    <location>
        <begin position="1"/>
        <end position="373"/>
    </location>
</feature>
<feature type="domain" description="bZIP" evidence="3">
    <location>
        <begin position="266"/>
        <end position="329"/>
    </location>
</feature>
<feature type="region of interest" description="Transactivation domain">
    <location>
        <begin position="1"/>
        <end position="206"/>
    </location>
</feature>
<feature type="region of interest" description="Required for interaction with MAPK8" evidence="1">
    <location>
        <begin position="1"/>
        <end position="83"/>
    </location>
</feature>
<feature type="region of interest" description="Disordered" evidence="4">
    <location>
        <begin position="127"/>
        <end position="150"/>
    </location>
</feature>
<feature type="region of interest" description="Disordered" evidence="4">
    <location>
        <begin position="205"/>
        <end position="226"/>
    </location>
</feature>
<feature type="region of interest" description="Basic motif" evidence="3">
    <location>
        <begin position="268"/>
        <end position="287"/>
    </location>
</feature>
<feature type="region of interest" description="Leucine-zipper" evidence="3">
    <location>
        <begin position="291"/>
        <end position="298"/>
    </location>
</feature>
<feature type="short sequence motif" description="PXY motif 1">
    <location>
        <begin position="61"/>
        <end position="65"/>
    </location>
</feature>
<feature type="short sequence motif" description="PXY motif 2">
    <location>
        <begin position="79"/>
        <end position="83"/>
    </location>
</feature>
<feature type="modified residue" description="Phosphoserine; by MAPK8" evidence="2">
    <location>
        <position position="157"/>
    </location>
</feature>
<feature type="modified residue" description="Phosphoserine; by PKA" evidence="2">
    <location>
        <position position="170"/>
    </location>
</feature>
<feature type="cross-link" description="Glycyl lysine isopeptide (Lys-Gly) (interchain with G-Cter in SUMO1)" evidence="6">
    <location>
        <position position="368"/>
    </location>
</feature>
<feature type="mutagenesis site" description="60% loss of DNA-binding and 5-fold loss of transactivation activity. Almost no colocalization with nuclear bodies." evidence="6">
    <original>K</original>
    <variation>R</variation>
    <location>
        <position position="368"/>
    </location>
</feature>
<feature type="sequence conflict" description="In Ref. 2; AAA35612." evidence="7" ref="2">
    <original>FQ</original>
    <variation>LE</variation>
    <location>
        <begin position="334"/>
        <end position="335"/>
    </location>
</feature>
<feature type="helix" evidence="8">
    <location>
        <begin position="225"/>
        <end position="233"/>
    </location>
</feature>
<feature type="helix" evidence="8">
    <location>
        <begin position="239"/>
        <end position="244"/>
    </location>
</feature>
<feature type="helix" evidence="8">
    <location>
        <begin position="247"/>
        <end position="256"/>
    </location>
</feature>
<feature type="helix" evidence="8">
    <location>
        <begin position="261"/>
        <end position="279"/>
    </location>
</feature>
<evidence type="ECO:0000250" key="1"/>
<evidence type="ECO:0000250" key="2">
    <source>
        <dbReference type="UniProtKB" id="Q07279"/>
    </source>
</evidence>
<evidence type="ECO:0000255" key="3">
    <source>
        <dbReference type="PROSITE-ProRule" id="PRU00978"/>
    </source>
</evidence>
<evidence type="ECO:0000256" key="4">
    <source>
        <dbReference type="SAM" id="MobiDB-lite"/>
    </source>
</evidence>
<evidence type="ECO:0000269" key="5">
    <source>
    </source>
</evidence>
<evidence type="ECO:0000269" key="6">
    <source>
    </source>
</evidence>
<evidence type="ECO:0000305" key="7"/>
<evidence type="ECO:0007829" key="8">
    <source>
        <dbReference type="PDB" id="2KZ5"/>
    </source>
</evidence>
<name>NFE2_HUMAN</name>
<organism>
    <name type="scientific">Homo sapiens</name>
    <name type="common">Human</name>
    <dbReference type="NCBI Taxonomy" id="9606"/>
    <lineage>
        <taxon>Eukaryota</taxon>
        <taxon>Metazoa</taxon>
        <taxon>Chordata</taxon>
        <taxon>Craniata</taxon>
        <taxon>Vertebrata</taxon>
        <taxon>Euteleostomi</taxon>
        <taxon>Mammalia</taxon>
        <taxon>Eutheria</taxon>
        <taxon>Euarchontoglires</taxon>
        <taxon>Primates</taxon>
        <taxon>Haplorrhini</taxon>
        <taxon>Catarrhini</taxon>
        <taxon>Hominidae</taxon>
        <taxon>Homo</taxon>
    </lineage>
</organism>
<keyword id="KW-0002">3D-structure</keyword>
<keyword id="KW-0010">Activator</keyword>
<keyword id="KW-0963">Cytoplasm</keyword>
<keyword id="KW-0238">DNA-binding</keyword>
<keyword id="KW-1017">Isopeptide bond</keyword>
<keyword id="KW-0539">Nucleus</keyword>
<keyword id="KW-0597">Phosphoprotein</keyword>
<keyword id="KW-1267">Proteomics identification</keyword>
<keyword id="KW-1185">Reference proteome</keyword>
<keyword id="KW-0804">Transcription</keyword>
<keyword id="KW-0805">Transcription regulation</keyword>
<keyword id="KW-0832">Ubl conjugation</keyword>